<comment type="function">
    <text evidence="2">Has no antibacterial activity. Has hemolytic activity.</text>
</comment>
<comment type="subcellular location">
    <subcellularLocation>
        <location evidence="3 4">Secreted</location>
    </subcellularLocation>
</comment>
<comment type="tissue specificity">
    <text evidence="8 9">Expressed by the skin glands.</text>
</comment>
<comment type="mass spectrometry" mass="1376.88" method="Electrospray" evidence="3"/>
<comment type="similarity">
    <text evidence="7">Belongs to the frog skin active peptide (FSAP) family. Temporin subfamily.</text>
</comment>
<comment type="online information" name="The antimicrobial peptide database">
    <link uri="https://wangapd3.com/database/query_output.php?ID=00097"/>
</comment>
<sequence length="13" mass="1379">VLPIIGNLLNSLL</sequence>
<evidence type="ECO:0000250" key="1">
    <source>
        <dbReference type="UniProtKB" id="P56917"/>
    </source>
</evidence>
<evidence type="ECO:0000250" key="2">
    <source>
        <dbReference type="UniProtKB" id="P56919"/>
    </source>
</evidence>
<evidence type="ECO:0000269" key="3">
    <source>
    </source>
</evidence>
<evidence type="ECO:0000269" key="4">
    <source>
    </source>
</evidence>
<evidence type="ECO:0000303" key="5">
    <source>
    </source>
</evidence>
<evidence type="ECO:0000303" key="6">
    <source>
    </source>
</evidence>
<evidence type="ECO:0000305" key="7"/>
<evidence type="ECO:0000305" key="8">
    <source>
    </source>
</evidence>
<evidence type="ECO:0000305" key="9">
    <source>
    </source>
</evidence>
<feature type="peptide" id="PRO_0000043582" description="Temporin-1Te" evidence="4">
    <location>
        <begin position="1"/>
        <end position="13"/>
    </location>
</feature>
<feature type="modified residue" description="Leucine amide" evidence="4">
    <location>
        <position position="13"/>
    </location>
</feature>
<organism>
    <name type="scientific">Rana temporaria</name>
    <name type="common">European common frog</name>
    <dbReference type="NCBI Taxonomy" id="8407"/>
    <lineage>
        <taxon>Eukaryota</taxon>
        <taxon>Metazoa</taxon>
        <taxon>Chordata</taxon>
        <taxon>Craniata</taxon>
        <taxon>Vertebrata</taxon>
        <taxon>Euteleostomi</taxon>
        <taxon>Amphibia</taxon>
        <taxon>Batrachia</taxon>
        <taxon>Anura</taxon>
        <taxon>Neobatrachia</taxon>
        <taxon>Ranoidea</taxon>
        <taxon>Ranidae</taxon>
        <taxon>Rana</taxon>
        <taxon>Rana</taxon>
    </lineage>
</organism>
<proteinExistence type="evidence at protein level"/>
<protein>
    <recommendedName>
        <fullName evidence="1">Temporin-1Te</fullName>
        <shortName evidence="1">TE</shortName>
    </recommendedName>
    <alternativeName>
        <fullName evidence="6">Temporin-E</fullName>
    </alternativeName>
</protein>
<accession>P56920</accession>
<name>TPE_RANTE</name>
<dbReference type="GO" id="GO:0005576">
    <property type="term" value="C:extracellular region"/>
    <property type="evidence" value="ECO:0000314"/>
    <property type="project" value="UniProtKB"/>
</dbReference>
<dbReference type="GO" id="GO:0045087">
    <property type="term" value="P:innate immune response"/>
    <property type="evidence" value="ECO:0007669"/>
    <property type="project" value="UniProtKB-KW"/>
</dbReference>
<dbReference type="GO" id="GO:0031640">
    <property type="term" value="P:killing of cells of another organism"/>
    <property type="evidence" value="ECO:0007669"/>
    <property type="project" value="UniProtKB-KW"/>
</dbReference>
<reference key="1">
    <citation type="journal article" date="1996" name="Eur. J. Biochem.">
        <title>Temporins, antimicrobial peptides from the European red frog Rana temporaria.</title>
        <authorList>
            <person name="Simmaco M."/>
            <person name="Mignogna G."/>
            <person name="Canofeni S."/>
            <person name="Miele R."/>
            <person name="Mangoni M.L."/>
            <person name="Barra D."/>
        </authorList>
    </citation>
    <scope>PROTEIN SEQUENCE</scope>
    <scope>AMIDATION AT LEU-13</scope>
    <scope>SUBCELLULAR LOCATION</scope>
    <source>
        <tissue>Skin secretion</tissue>
    </source>
</reference>
<reference key="2">
    <citation type="journal article" date="2021" name="Anal. Bioanal. Chem.">
        <title>Differentiation of Central Slovenian and Moscow populations of Rana temporaria frogs using peptide biomarkers of temporins family.</title>
        <authorList>
            <person name="Samgina T.Y."/>
            <person name="Vasileva I.D."/>
            <person name="Kovalev S.V."/>
            <person name="Trebse P."/>
            <person name="Torkar G."/>
            <person name="Surin A.K."/>
            <person name="Zubarev R.A."/>
            <person name="Lebedev A.T."/>
        </authorList>
    </citation>
    <scope>PROTEIN SEQUENCE</scope>
    <scope>IDENTIFICATION BY MASS SPECTROMETRY</scope>
    <scope>SUBCELLULAR LOCATION</scope>
    <scope>AMIDATION AT LEU-13</scope>
    <source>
        <tissue evidence="5">Skin secretion</tissue>
    </source>
</reference>
<keyword id="KW-0027">Amidation</keyword>
<keyword id="KW-0878">Amphibian defense peptide</keyword>
<keyword id="KW-0204">Cytolysis</keyword>
<keyword id="KW-0903">Direct protein sequencing</keyword>
<keyword id="KW-0354">Hemolysis</keyword>
<keyword id="KW-0391">Immunity</keyword>
<keyword id="KW-0399">Innate immunity</keyword>
<keyword id="KW-0964">Secreted</keyword>